<accession>Q728Q1</accession>
<gene>
    <name evidence="1" type="primary">gltX</name>
    <name type="ordered locus">DVU_2552</name>
</gene>
<feature type="chain" id="PRO_0000119554" description="Glutamate--tRNA ligase">
    <location>
        <begin position="1"/>
        <end position="463"/>
    </location>
</feature>
<feature type="short sequence motif" description="'HIGH' region" evidence="1">
    <location>
        <begin position="10"/>
        <end position="20"/>
    </location>
</feature>
<feature type="short sequence motif" description="'KMSKS' region" evidence="1">
    <location>
        <begin position="236"/>
        <end position="240"/>
    </location>
</feature>
<feature type="binding site" evidence="1">
    <location>
        <position position="239"/>
    </location>
    <ligand>
        <name>ATP</name>
        <dbReference type="ChEBI" id="CHEBI:30616"/>
    </ligand>
</feature>
<sequence length="463" mass="51485">MSNVVTRFAPSPTGHLHIGGARTAIFNWLLARHFGGRFVLRIEDTDTERSKQEYTDSILASMKWLGLDWDGDLIYQSERFDIYNSYIDRLLESGHAYWCECPPDEVEKMREEARAKGLKPRYNGRCRSRDLGPGDGRVVRLKAPAEGRIVFDDLVKGTVAFDVAELDDMVLRRSDGAPTYNLAVVVDDATMGVTHVLRGDDHLSNTPKQILLYQALGFDLPRFGHVPMILGPDRKKLSKRHGAKAVIEYEQYGLLPQALVNYLVRLGWSHGDQEIFALEELVEKFGTENLNSSAAGFDPDKLEWLNGHYLRETSPEELARLVLPFVAAEGFDVDASRLAQLVPLFRERANNLVELARVMRFMLVPAAEVEYDAAAVAKALTEEGRRHVAGVREALAALGTFDREGCEKAIHDYVEGNGLKFKQVAPAVRVAVVGAMGGPGLPDMMALLGRDDVLARLDRAVAL</sequence>
<organism>
    <name type="scientific">Nitratidesulfovibrio vulgaris (strain ATCC 29579 / DSM 644 / CCUG 34227 / NCIMB 8303 / VKM B-1760 / Hildenborough)</name>
    <name type="common">Desulfovibrio vulgaris</name>
    <dbReference type="NCBI Taxonomy" id="882"/>
    <lineage>
        <taxon>Bacteria</taxon>
        <taxon>Pseudomonadati</taxon>
        <taxon>Thermodesulfobacteriota</taxon>
        <taxon>Desulfovibrionia</taxon>
        <taxon>Desulfovibrionales</taxon>
        <taxon>Desulfovibrionaceae</taxon>
        <taxon>Nitratidesulfovibrio</taxon>
    </lineage>
</organism>
<proteinExistence type="inferred from homology"/>
<dbReference type="EC" id="6.1.1.17" evidence="1"/>
<dbReference type="EMBL" id="AE017285">
    <property type="protein sequence ID" value="AAS97024.1"/>
    <property type="molecule type" value="Genomic_DNA"/>
</dbReference>
<dbReference type="RefSeq" id="WP_010939822.1">
    <property type="nucleotide sequence ID" value="NC_002937.3"/>
</dbReference>
<dbReference type="RefSeq" id="YP_011764.1">
    <property type="nucleotide sequence ID" value="NC_002937.3"/>
</dbReference>
<dbReference type="SMR" id="Q728Q1"/>
<dbReference type="STRING" id="882.DVU_2552"/>
<dbReference type="PaxDb" id="882-DVU_2552"/>
<dbReference type="EnsemblBacteria" id="AAS97024">
    <property type="protein sequence ID" value="AAS97024"/>
    <property type="gene ID" value="DVU_2552"/>
</dbReference>
<dbReference type="KEGG" id="dvu:DVU_2552"/>
<dbReference type="PATRIC" id="fig|882.5.peg.2308"/>
<dbReference type="eggNOG" id="COG0008">
    <property type="taxonomic scope" value="Bacteria"/>
</dbReference>
<dbReference type="HOGENOM" id="CLU_015768_6_3_7"/>
<dbReference type="OrthoDB" id="9807503at2"/>
<dbReference type="PhylomeDB" id="Q728Q1"/>
<dbReference type="Proteomes" id="UP000002194">
    <property type="component" value="Chromosome"/>
</dbReference>
<dbReference type="GO" id="GO:0005829">
    <property type="term" value="C:cytosol"/>
    <property type="evidence" value="ECO:0007669"/>
    <property type="project" value="TreeGrafter"/>
</dbReference>
<dbReference type="GO" id="GO:0005524">
    <property type="term" value="F:ATP binding"/>
    <property type="evidence" value="ECO:0007669"/>
    <property type="project" value="UniProtKB-UniRule"/>
</dbReference>
<dbReference type="GO" id="GO:0004818">
    <property type="term" value="F:glutamate-tRNA ligase activity"/>
    <property type="evidence" value="ECO:0007669"/>
    <property type="project" value="UniProtKB-UniRule"/>
</dbReference>
<dbReference type="GO" id="GO:0000049">
    <property type="term" value="F:tRNA binding"/>
    <property type="evidence" value="ECO:0007669"/>
    <property type="project" value="InterPro"/>
</dbReference>
<dbReference type="GO" id="GO:0008270">
    <property type="term" value="F:zinc ion binding"/>
    <property type="evidence" value="ECO:0007669"/>
    <property type="project" value="UniProtKB-UniRule"/>
</dbReference>
<dbReference type="GO" id="GO:0006424">
    <property type="term" value="P:glutamyl-tRNA aminoacylation"/>
    <property type="evidence" value="ECO:0007669"/>
    <property type="project" value="UniProtKB-UniRule"/>
</dbReference>
<dbReference type="CDD" id="cd00808">
    <property type="entry name" value="GluRS_core"/>
    <property type="match status" value="1"/>
</dbReference>
<dbReference type="FunFam" id="3.40.50.620:FF:000007">
    <property type="entry name" value="Glutamate--tRNA ligase"/>
    <property type="match status" value="1"/>
</dbReference>
<dbReference type="Gene3D" id="1.10.10.350">
    <property type="match status" value="1"/>
</dbReference>
<dbReference type="Gene3D" id="3.40.50.620">
    <property type="entry name" value="HUPs"/>
    <property type="match status" value="1"/>
</dbReference>
<dbReference type="HAMAP" id="MF_00022">
    <property type="entry name" value="Glu_tRNA_synth_type1"/>
    <property type="match status" value="1"/>
</dbReference>
<dbReference type="InterPro" id="IPR045462">
    <property type="entry name" value="aa-tRNA-synth_I_cd-bd"/>
</dbReference>
<dbReference type="InterPro" id="IPR020751">
    <property type="entry name" value="aa-tRNA-synth_I_codon-bd_sub2"/>
</dbReference>
<dbReference type="InterPro" id="IPR001412">
    <property type="entry name" value="aa-tRNA-synth_I_CS"/>
</dbReference>
<dbReference type="InterPro" id="IPR008925">
    <property type="entry name" value="aa_tRNA-synth_I_cd-bd_sf"/>
</dbReference>
<dbReference type="InterPro" id="IPR004527">
    <property type="entry name" value="Glu-tRNA-ligase_bac/mito"/>
</dbReference>
<dbReference type="InterPro" id="IPR000924">
    <property type="entry name" value="Glu/Gln-tRNA-synth"/>
</dbReference>
<dbReference type="InterPro" id="IPR020058">
    <property type="entry name" value="Glu/Gln-tRNA-synth_Ib_cat-dom"/>
</dbReference>
<dbReference type="InterPro" id="IPR049940">
    <property type="entry name" value="GluQ/Sye"/>
</dbReference>
<dbReference type="InterPro" id="IPR033910">
    <property type="entry name" value="GluRS_core"/>
</dbReference>
<dbReference type="InterPro" id="IPR014729">
    <property type="entry name" value="Rossmann-like_a/b/a_fold"/>
</dbReference>
<dbReference type="NCBIfam" id="TIGR00464">
    <property type="entry name" value="gltX_bact"/>
    <property type="match status" value="1"/>
</dbReference>
<dbReference type="NCBIfam" id="NF004314">
    <property type="entry name" value="PRK05710.1-3"/>
    <property type="match status" value="1"/>
</dbReference>
<dbReference type="PANTHER" id="PTHR43311">
    <property type="entry name" value="GLUTAMATE--TRNA LIGASE"/>
    <property type="match status" value="1"/>
</dbReference>
<dbReference type="PANTHER" id="PTHR43311:SF2">
    <property type="entry name" value="GLUTAMATE--TRNA LIGASE, MITOCHONDRIAL-RELATED"/>
    <property type="match status" value="1"/>
</dbReference>
<dbReference type="Pfam" id="PF19269">
    <property type="entry name" value="Anticodon_2"/>
    <property type="match status" value="1"/>
</dbReference>
<dbReference type="Pfam" id="PF00749">
    <property type="entry name" value="tRNA-synt_1c"/>
    <property type="match status" value="1"/>
</dbReference>
<dbReference type="PRINTS" id="PR00987">
    <property type="entry name" value="TRNASYNTHGLU"/>
</dbReference>
<dbReference type="SUPFAM" id="SSF48163">
    <property type="entry name" value="An anticodon-binding domain of class I aminoacyl-tRNA synthetases"/>
    <property type="match status" value="1"/>
</dbReference>
<dbReference type="SUPFAM" id="SSF52374">
    <property type="entry name" value="Nucleotidylyl transferase"/>
    <property type="match status" value="1"/>
</dbReference>
<dbReference type="PROSITE" id="PS00178">
    <property type="entry name" value="AA_TRNA_LIGASE_I"/>
    <property type="match status" value="1"/>
</dbReference>
<protein>
    <recommendedName>
        <fullName evidence="1">Glutamate--tRNA ligase</fullName>
        <ecNumber evidence="1">6.1.1.17</ecNumber>
    </recommendedName>
    <alternativeName>
        <fullName evidence="1">Glutamyl-tRNA synthetase</fullName>
        <shortName evidence="1">GluRS</shortName>
    </alternativeName>
</protein>
<keyword id="KW-0030">Aminoacyl-tRNA synthetase</keyword>
<keyword id="KW-0067">ATP-binding</keyword>
<keyword id="KW-0963">Cytoplasm</keyword>
<keyword id="KW-0436">Ligase</keyword>
<keyword id="KW-0547">Nucleotide-binding</keyword>
<keyword id="KW-0648">Protein biosynthesis</keyword>
<keyword id="KW-1185">Reference proteome</keyword>
<reference key="1">
    <citation type="journal article" date="2004" name="Nat. Biotechnol.">
        <title>The genome sequence of the anaerobic, sulfate-reducing bacterium Desulfovibrio vulgaris Hildenborough.</title>
        <authorList>
            <person name="Heidelberg J.F."/>
            <person name="Seshadri R."/>
            <person name="Haveman S.A."/>
            <person name="Hemme C.L."/>
            <person name="Paulsen I.T."/>
            <person name="Kolonay J.F."/>
            <person name="Eisen J.A."/>
            <person name="Ward N.L."/>
            <person name="Methe B.A."/>
            <person name="Brinkac L.M."/>
            <person name="Daugherty S.C."/>
            <person name="DeBoy R.T."/>
            <person name="Dodson R.J."/>
            <person name="Durkin A.S."/>
            <person name="Madupu R."/>
            <person name="Nelson W.C."/>
            <person name="Sullivan S.A."/>
            <person name="Fouts D.E."/>
            <person name="Haft D.H."/>
            <person name="Selengut J."/>
            <person name="Peterson J.D."/>
            <person name="Davidsen T.M."/>
            <person name="Zafar N."/>
            <person name="Zhou L."/>
            <person name="Radune D."/>
            <person name="Dimitrov G."/>
            <person name="Hance M."/>
            <person name="Tran K."/>
            <person name="Khouri H.M."/>
            <person name="Gill J."/>
            <person name="Utterback T.R."/>
            <person name="Feldblyum T.V."/>
            <person name="Wall J.D."/>
            <person name="Voordouw G."/>
            <person name="Fraser C.M."/>
        </authorList>
    </citation>
    <scope>NUCLEOTIDE SEQUENCE [LARGE SCALE GENOMIC DNA]</scope>
    <source>
        <strain>ATCC 29579 / DSM 644 / CCUG 34227 / NCIMB 8303 / VKM B-1760 / Hildenborough</strain>
    </source>
</reference>
<comment type="function">
    <text evidence="1">Catalyzes the attachment of glutamate to tRNA(Glu) in a two-step reaction: glutamate is first activated by ATP to form Glu-AMP and then transferred to the acceptor end of tRNA(Glu).</text>
</comment>
<comment type="catalytic activity">
    <reaction evidence="1">
        <text>tRNA(Glu) + L-glutamate + ATP = L-glutamyl-tRNA(Glu) + AMP + diphosphate</text>
        <dbReference type="Rhea" id="RHEA:23540"/>
        <dbReference type="Rhea" id="RHEA-COMP:9663"/>
        <dbReference type="Rhea" id="RHEA-COMP:9680"/>
        <dbReference type="ChEBI" id="CHEBI:29985"/>
        <dbReference type="ChEBI" id="CHEBI:30616"/>
        <dbReference type="ChEBI" id="CHEBI:33019"/>
        <dbReference type="ChEBI" id="CHEBI:78442"/>
        <dbReference type="ChEBI" id="CHEBI:78520"/>
        <dbReference type="ChEBI" id="CHEBI:456215"/>
        <dbReference type="EC" id="6.1.1.17"/>
    </reaction>
</comment>
<comment type="subunit">
    <text evidence="1">Monomer.</text>
</comment>
<comment type="subcellular location">
    <subcellularLocation>
        <location evidence="1">Cytoplasm</location>
    </subcellularLocation>
</comment>
<comment type="similarity">
    <text evidence="1">Belongs to the class-I aminoacyl-tRNA synthetase family. Glutamate--tRNA ligase type 1 subfamily.</text>
</comment>
<name>SYE_NITV2</name>
<evidence type="ECO:0000255" key="1">
    <source>
        <dbReference type="HAMAP-Rule" id="MF_00022"/>
    </source>
</evidence>